<feature type="chain" id="PRO_1000003498" description="Small ribosomal subunit protein bS18">
    <location>
        <begin position="1"/>
        <end position="75"/>
    </location>
</feature>
<proteinExistence type="inferred from homology"/>
<protein>
    <recommendedName>
        <fullName evidence="1">Small ribosomal subunit protein bS18</fullName>
    </recommendedName>
    <alternativeName>
        <fullName evidence="2">30S ribosomal protein S18</fullName>
    </alternativeName>
</protein>
<evidence type="ECO:0000255" key="1">
    <source>
        <dbReference type="HAMAP-Rule" id="MF_00270"/>
    </source>
</evidence>
<evidence type="ECO:0000305" key="2"/>
<reference key="1">
    <citation type="journal article" date="2010" name="PLoS ONE">
        <title>Genome sequence of Cronobacter sakazakii BAA-894 and comparative genomic hybridization analysis with other Cronobacter species.</title>
        <authorList>
            <person name="Kucerova E."/>
            <person name="Clifton S.W."/>
            <person name="Xia X.Q."/>
            <person name="Long F."/>
            <person name="Porwollik S."/>
            <person name="Fulton L."/>
            <person name="Fronick C."/>
            <person name="Minx P."/>
            <person name="Kyung K."/>
            <person name="Warren W."/>
            <person name="Fulton R."/>
            <person name="Feng D."/>
            <person name="Wollam A."/>
            <person name="Shah N."/>
            <person name="Bhonagiri V."/>
            <person name="Nash W.E."/>
            <person name="Hallsworth-Pepin K."/>
            <person name="Wilson R.K."/>
            <person name="McClelland M."/>
            <person name="Forsythe S.J."/>
        </authorList>
    </citation>
    <scope>NUCLEOTIDE SEQUENCE [LARGE SCALE GENOMIC DNA]</scope>
    <source>
        <strain>ATCC BAA-894</strain>
    </source>
</reference>
<dbReference type="EMBL" id="CP000783">
    <property type="protein sequence ID" value="ABU75503.1"/>
    <property type="molecule type" value="Genomic_DNA"/>
</dbReference>
<dbReference type="RefSeq" id="WP_000135199.1">
    <property type="nucleotide sequence ID" value="NC_009778.1"/>
</dbReference>
<dbReference type="SMR" id="A7MM78"/>
<dbReference type="GeneID" id="98186237"/>
<dbReference type="KEGG" id="esa:ESA_00202"/>
<dbReference type="HOGENOM" id="CLU_148710_2_3_6"/>
<dbReference type="Proteomes" id="UP000000260">
    <property type="component" value="Chromosome"/>
</dbReference>
<dbReference type="GO" id="GO:0022627">
    <property type="term" value="C:cytosolic small ribosomal subunit"/>
    <property type="evidence" value="ECO:0007669"/>
    <property type="project" value="TreeGrafter"/>
</dbReference>
<dbReference type="GO" id="GO:0070181">
    <property type="term" value="F:small ribosomal subunit rRNA binding"/>
    <property type="evidence" value="ECO:0007669"/>
    <property type="project" value="TreeGrafter"/>
</dbReference>
<dbReference type="GO" id="GO:0003735">
    <property type="term" value="F:structural constituent of ribosome"/>
    <property type="evidence" value="ECO:0007669"/>
    <property type="project" value="InterPro"/>
</dbReference>
<dbReference type="GO" id="GO:0006412">
    <property type="term" value="P:translation"/>
    <property type="evidence" value="ECO:0007669"/>
    <property type="project" value="UniProtKB-UniRule"/>
</dbReference>
<dbReference type="FunFam" id="4.10.640.10:FF:000001">
    <property type="entry name" value="30S ribosomal protein S18"/>
    <property type="match status" value="1"/>
</dbReference>
<dbReference type="Gene3D" id="4.10.640.10">
    <property type="entry name" value="Ribosomal protein S18"/>
    <property type="match status" value="1"/>
</dbReference>
<dbReference type="HAMAP" id="MF_00270">
    <property type="entry name" value="Ribosomal_bS18"/>
    <property type="match status" value="1"/>
</dbReference>
<dbReference type="InterPro" id="IPR001648">
    <property type="entry name" value="Ribosomal_bS18"/>
</dbReference>
<dbReference type="InterPro" id="IPR018275">
    <property type="entry name" value="Ribosomal_bS18_CS"/>
</dbReference>
<dbReference type="InterPro" id="IPR036870">
    <property type="entry name" value="Ribosomal_bS18_sf"/>
</dbReference>
<dbReference type="NCBIfam" id="TIGR00165">
    <property type="entry name" value="S18"/>
    <property type="match status" value="1"/>
</dbReference>
<dbReference type="PANTHER" id="PTHR13479">
    <property type="entry name" value="30S RIBOSOMAL PROTEIN S18"/>
    <property type="match status" value="1"/>
</dbReference>
<dbReference type="PANTHER" id="PTHR13479:SF40">
    <property type="entry name" value="SMALL RIBOSOMAL SUBUNIT PROTEIN BS18M"/>
    <property type="match status" value="1"/>
</dbReference>
<dbReference type="Pfam" id="PF01084">
    <property type="entry name" value="Ribosomal_S18"/>
    <property type="match status" value="1"/>
</dbReference>
<dbReference type="PRINTS" id="PR00974">
    <property type="entry name" value="RIBOSOMALS18"/>
</dbReference>
<dbReference type="SUPFAM" id="SSF46911">
    <property type="entry name" value="Ribosomal protein S18"/>
    <property type="match status" value="1"/>
</dbReference>
<dbReference type="PROSITE" id="PS00057">
    <property type="entry name" value="RIBOSOMAL_S18"/>
    <property type="match status" value="1"/>
</dbReference>
<gene>
    <name evidence="1" type="primary">rpsR</name>
    <name type="ordered locus">ESA_00202</name>
</gene>
<accession>A7MM78</accession>
<name>RS18_CROS8</name>
<organism>
    <name type="scientific">Cronobacter sakazakii (strain ATCC BAA-894)</name>
    <name type="common">Enterobacter sakazakii</name>
    <dbReference type="NCBI Taxonomy" id="290339"/>
    <lineage>
        <taxon>Bacteria</taxon>
        <taxon>Pseudomonadati</taxon>
        <taxon>Pseudomonadota</taxon>
        <taxon>Gammaproteobacteria</taxon>
        <taxon>Enterobacterales</taxon>
        <taxon>Enterobacteriaceae</taxon>
        <taxon>Cronobacter</taxon>
    </lineage>
</organism>
<comment type="function">
    <text evidence="1">Binds as a heterodimer with protein bS6 to the central domain of the 16S rRNA, where it helps stabilize the platform of the 30S subunit.</text>
</comment>
<comment type="subunit">
    <text evidence="1">Part of the 30S ribosomal subunit. Forms a tight heterodimer with protein bS6.</text>
</comment>
<comment type="similarity">
    <text evidence="1">Belongs to the bacterial ribosomal protein bS18 family.</text>
</comment>
<sequence length="75" mass="8986">MARYFRRRKFCRFTAEGVQEIDYKDIATLKNYITESGKIVPSRITGTRAKYQRQLARAIKRARYLSLLPYTDRHQ</sequence>
<keyword id="KW-1185">Reference proteome</keyword>
<keyword id="KW-0687">Ribonucleoprotein</keyword>
<keyword id="KW-0689">Ribosomal protein</keyword>
<keyword id="KW-0694">RNA-binding</keyword>
<keyword id="KW-0699">rRNA-binding</keyword>